<evidence type="ECO:0000256" key="1">
    <source>
        <dbReference type="SAM" id="MobiDB-lite"/>
    </source>
</evidence>
<evidence type="ECO:0000269" key="2">
    <source>
    </source>
</evidence>
<evidence type="ECO:0000269" key="3">
    <source>
    </source>
</evidence>
<evidence type="ECO:0000269" key="4">
    <source>
    </source>
</evidence>
<evidence type="ECO:0000305" key="5"/>
<reference key="1">
    <citation type="journal article" date="1993" name="Mol. Microbiol.">
        <title>The RpoS sigma factor relieves H-NS-mediated transcriptional repression of csgA, the subunit gene of fibronectin-binding curli in Escherichia coli.</title>
        <authorList>
            <person name="Olsen A."/>
            <person name="Arnqvist A."/>
        </authorList>
    </citation>
    <scope>NUCLEOTIDE SEQUENCE [GENOMIC DNA]</scope>
    <source>
        <strain>K12 / W3110 / ATCC 27325 / DSM 5911</strain>
    </source>
</reference>
<reference key="2">
    <citation type="journal article" date="1995" name="Mol. Microbiol.">
        <title>Expression of two csg operons is required for production of fibronectin- and congo red-binding curli polymers in Escherichia coli K-12.</title>
        <authorList>
            <person name="Hammar M."/>
            <person name="Arnqvist A."/>
            <person name="Bian Z."/>
            <person name="Olsen A."/>
            <person name="Normark S."/>
        </authorList>
    </citation>
    <scope>NUCLEOTIDE SEQUENCE [GENOMIC DNA]</scope>
    <source>
        <strain>K12 / MC4100 / ATCC 35695 / DSM 6574</strain>
    </source>
</reference>
<reference key="3">
    <citation type="journal article" date="1996" name="DNA Res.">
        <title>A 718-kb DNA sequence of the Escherichia coli K-12 genome corresponding to the 12.7-28.0 min region on the linkage map.</title>
        <authorList>
            <person name="Oshima T."/>
            <person name="Aiba H."/>
            <person name="Baba T."/>
            <person name="Fujita K."/>
            <person name="Hayashi K."/>
            <person name="Honjo A."/>
            <person name="Ikemoto K."/>
            <person name="Inada T."/>
            <person name="Itoh T."/>
            <person name="Kajihara M."/>
            <person name="Kanai K."/>
            <person name="Kashimoto K."/>
            <person name="Kimura S."/>
            <person name="Kitagawa M."/>
            <person name="Makino K."/>
            <person name="Masuda S."/>
            <person name="Miki T."/>
            <person name="Mizobuchi K."/>
            <person name="Mori H."/>
            <person name="Motomura K."/>
            <person name="Nakamura Y."/>
            <person name="Nashimoto H."/>
            <person name="Nishio Y."/>
            <person name="Saito N."/>
            <person name="Sampei G."/>
            <person name="Seki Y."/>
            <person name="Tagami H."/>
            <person name="Takemoto K."/>
            <person name="Wada C."/>
            <person name="Yamamoto Y."/>
            <person name="Yano M."/>
            <person name="Horiuchi T."/>
        </authorList>
    </citation>
    <scope>NUCLEOTIDE SEQUENCE [LARGE SCALE GENOMIC DNA]</scope>
    <source>
        <strain>K12 / W3110 / ATCC 27325 / DSM 5911</strain>
    </source>
</reference>
<reference key="4">
    <citation type="journal article" date="1997" name="Science">
        <title>The complete genome sequence of Escherichia coli K-12.</title>
        <authorList>
            <person name="Blattner F.R."/>
            <person name="Plunkett G. III"/>
            <person name="Bloch C.A."/>
            <person name="Perna N.T."/>
            <person name="Burland V."/>
            <person name="Riley M."/>
            <person name="Collado-Vides J."/>
            <person name="Glasner J.D."/>
            <person name="Rode C.K."/>
            <person name="Mayhew G.F."/>
            <person name="Gregor J."/>
            <person name="Davis N.W."/>
            <person name="Kirkpatrick H.A."/>
            <person name="Goeden M.A."/>
            <person name="Rose D.J."/>
            <person name="Mau B."/>
            <person name="Shao Y."/>
        </authorList>
    </citation>
    <scope>NUCLEOTIDE SEQUENCE [LARGE SCALE GENOMIC DNA]</scope>
    <source>
        <strain>K12 / MG1655 / ATCC 47076</strain>
    </source>
</reference>
<reference key="5">
    <citation type="journal article" date="2006" name="Mol. Syst. Biol.">
        <title>Highly accurate genome sequences of Escherichia coli K-12 strains MG1655 and W3110.</title>
        <authorList>
            <person name="Hayashi K."/>
            <person name="Morooka N."/>
            <person name="Yamamoto Y."/>
            <person name="Fujita K."/>
            <person name="Isono K."/>
            <person name="Choi S."/>
            <person name="Ohtsubo E."/>
            <person name="Baba T."/>
            <person name="Wanner B.L."/>
            <person name="Mori H."/>
            <person name="Horiuchi T."/>
        </authorList>
    </citation>
    <scope>NUCLEOTIDE SEQUENCE [LARGE SCALE GENOMIC DNA]</scope>
    <source>
        <strain>K12 / W3110 / ATCC 27325 / DSM 5911</strain>
    </source>
</reference>
<reference key="6">
    <citation type="journal article" date="1992" name="Mol. Microbiol.">
        <title>The Crl protein activates cryptic genes for curli formation and fibronectin binding in Escherichia coli HB101.</title>
        <authorList>
            <person name="Arnqvist A."/>
            <person name="Olsen A."/>
            <person name="Pfeifer J."/>
            <person name="Russell D.G."/>
            <person name="Normark S."/>
        </authorList>
    </citation>
    <scope>PROTEIN SEQUENCE OF 21-40</scope>
    <source>
        <strain>K12 / YMEL</strain>
    </source>
</reference>
<reference key="7">
    <citation type="journal article" date="1991" name="J. Bacteriol.">
        <title>Purification and characterization of thin, aggregative fimbriae from Salmonella enteritidis.</title>
        <authorList>
            <person name="Collinson S.K."/>
            <person name="Emoedy L."/>
            <person name="Mueller K.-H."/>
            <person name="Trust T.J."/>
            <person name="Kay W.W."/>
        </authorList>
    </citation>
    <scope>PROTEIN SEQUENCE OF 21-31</scope>
</reference>
<reference key="8">
    <citation type="journal article" date="2006" name="Mol. Microbiol.">
        <title>Cyclic-di-GMP-mediated signalling within the sigma network of Escherichia coli.</title>
        <authorList>
            <person name="Weber H."/>
            <person name="Pesavento C."/>
            <person name="Possling A."/>
            <person name="Tischendorf G."/>
            <person name="Hengge R."/>
        </authorList>
    </citation>
    <scope>INDUCTION</scope>
    <source>
        <strain>K12 / MC4100</strain>
    </source>
</reference>
<dbReference type="EMBL" id="L04979">
    <property type="protein sequence ID" value="AAA23616.1"/>
    <property type="molecule type" value="Genomic_DNA"/>
</dbReference>
<dbReference type="EMBL" id="X90754">
    <property type="protein sequence ID" value="CAA62282.1"/>
    <property type="molecule type" value="Genomic_DNA"/>
</dbReference>
<dbReference type="EMBL" id="U00096">
    <property type="protein sequence ID" value="AAC74126.1"/>
    <property type="molecule type" value="Genomic_DNA"/>
</dbReference>
<dbReference type="EMBL" id="AP009048">
    <property type="protein sequence ID" value="BAA35832.1"/>
    <property type="molecule type" value="Genomic_DNA"/>
</dbReference>
<dbReference type="PIR" id="S70788">
    <property type="entry name" value="S70788"/>
</dbReference>
<dbReference type="RefSeq" id="NP_415560.1">
    <property type="nucleotide sequence ID" value="NC_000913.3"/>
</dbReference>
<dbReference type="RefSeq" id="WP_000771437.1">
    <property type="nucleotide sequence ID" value="NZ_STEB01000016.1"/>
</dbReference>
<dbReference type="PDB" id="6G8C">
    <property type="method" value="X-ray"/>
    <property type="resolution" value="1.65 A"/>
    <property type="chains" value="B=47-52"/>
</dbReference>
<dbReference type="PDB" id="6G8D">
    <property type="method" value="X-ray"/>
    <property type="resolution" value="1.85 A"/>
    <property type="chains" value="A=45-50"/>
</dbReference>
<dbReference type="PDB" id="6G8E">
    <property type="method" value="X-ray"/>
    <property type="resolution" value="1.70 A"/>
    <property type="chains" value="A/B=137-142"/>
</dbReference>
<dbReference type="PDB" id="6G9G">
    <property type="method" value="X-ray"/>
    <property type="resolution" value="1.60 A"/>
    <property type="chains" value="B=129-134"/>
</dbReference>
<dbReference type="PDB" id="6L7C">
    <property type="method" value="EM"/>
    <property type="resolution" value="3.34 A"/>
    <property type="chains" value="S/T/U/V/W/X/Y/Z/a=21-42"/>
</dbReference>
<dbReference type="PDB" id="8ENQ">
    <property type="method" value="EM"/>
    <property type="resolution" value="3.60 A"/>
    <property type="chains" value="A/B/C/D/E/F/G=21-151"/>
</dbReference>
<dbReference type="PDB" id="8ENR">
    <property type="method" value="EM"/>
    <property type="resolution" value="3.80 A"/>
    <property type="chains" value="A/B/C/D/E/F/G/H=21-151"/>
</dbReference>
<dbReference type="PDBsum" id="6G8C"/>
<dbReference type="PDBsum" id="6G8D"/>
<dbReference type="PDBsum" id="6G8E"/>
<dbReference type="PDBsum" id="6G9G"/>
<dbReference type="PDBsum" id="6L7C"/>
<dbReference type="PDBsum" id="8ENQ"/>
<dbReference type="PDBsum" id="8ENR"/>
<dbReference type="EMDB" id="EMD-28276"/>
<dbReference type="EMDB" id="EMD-28277"/>
<dbReference type="SMR" id="P28307"/>
<dbReference type="BioGRID" id="4260065">
    <property type="interactions" value="16"/>
</dbReference>
<dbReference type="DIP" id="DIP-9325N"/>
<dbReference type="FunCoup" id="P28307">
    <property type="interactions" value="253"/>
</dbReference>
<dbReference type="IntAct" id="P28307">
    <property type="interactions" value="1"/>
</dbReference>
<dbReference type="STRING" id="511145.b1042"/>
<dbReference type="ChEMBL" id="CHEMBL3309018"/>
<dbReference type="PaxDb" id="511145-b1042"/>
<dbReference type="DNASU" id="949055"/>
<dbReference type="EnsemblBacteria" id="AAC74126">
    <property type="protein sequence ID" value="AAC74126"/>
    <property type="gene ID" value="b1042"/>
</dbReference>
<dbReference type="GeneID" id="75203630"/>
<dbReference type="GeneID" id="949055"/>
<dbReference type="KEGG" id="ecj:JW1025"/>
<dbReference type="KEGG" id="eco:b1042"/>
<dbReference type="KEGG" id="ecoc:C3026_06345"/>
<dbReference type="PATRIC" id="fig|1411691.4.peg.1227"/>
<dbReference type="EchoBASE" id="EB1452"/>
<dbReference type="eggNOG" id="ENOG5030M63">
    <property type="taxonomic scope" value="Bacteria"/>
</dbReference>
<dbReference type="HOGENOM" id="CLU_1861613_0_0_6"/>
<dbReference type="InParanoid" id="P28307"/>
<dbReference type="OMA" id="MKLWKIV"/>
<dbReference type="OrthoDB" id="6572754at2"/>
<dbReference type="PhylomeDB" id="P28307"/>
<dbReference type="BioCyc" id="EcoCyc:EG11489-MONOMER"/>
<dbReference type="PHI-base" id="PHI:8487"/>
<dbReference type="PRO" id="PR:P28307"/>
<dbReference type="Proteomes" id="UP000000625">
    <property type="component" value="Chromosome"/>
</dbReference>
<dbReference type="GO" id="GO:0009289">
    <property type="term" value="C:pilus"/>
    <property type="evidence" value="ECO:0007669"/>
    <property type="project" value="UniProtKB-SubCell"/>
</dbReference>
<dbReference type="GO" id="GO:0042802">
    <property type="term" value="F:identical protein binding"/>
    <property type="evidence" value="ECO:0000353"/>
    <property type="project" value="IntAct"/>
</dbReference>
<dbReference type="GO" id="GO:1990000">
    <property type="term" value="P:amyloid fibril formation"/>
    <property type="evidence" value="ECO:0000314"/>
    <property type="project" value="DisProt"/>
</dbReference>
<dbReference type="GO" id="GO:0007155">
    <property type="term" value="P:cell adhesion"/>
    <property type="evidence" value="ECO:0007669"/>
    <property type="project" value="InterPro"/>
</dbReference>
<dbReference type="GO" id="GO:1905906">
    <property type="term" value="P:regulation of amyloid fibril formation"/>
    <property type="evidence" value="ECO:0000314"/>
    <property type="project" value="DisProt"/>
</dbReference>
<dbReference type="GO" id="GO:0044010">
    <property type="term" value="P:single-species biofilm formation"/>
    <property type="evidence" value="ECO:0000315"/>
    <property type="project" value="EcoCyc"/>
</dbReference>
<dbReference type="InterPro" id="IPR009742">
    <property type="entry name" value="Curlin_rpt"/>
</dbReference>
<dbReference type="NCBIfam" id="NF007470">
    <property type="entry name" value="PRK10051.1"/>
    <property type="match status" value="1"/>
</dbReference>
<dbReference type="Pfam" id="PF07012">
    <property type="entry name" value="Curlin_rpt"/>
    <property type="match status" value="3"/>
</dbReference>
<accession>P28307</accession>
<organism>
    <name type="scientific">Escherichia coli (strain K12)</name>
    <dbReference type="NCBI Taxonomy" id="83333"/>
    <lineage>
        <taxon>Bacteria</taxon>
        <taxon>Pseudomonadati</taxon>
        <taxon>Pseudomonadota</taxon>
        <taxon>Gammaproteobacteria</taxon>
        <taxon>Enterobacterales</taxon>
        <taxon>Enterobacteriaceae</taxon>
        <taxon>Escherichia</taxon>
    </lineage>
</organism>
<name>CSGA_ECOLI</name>
<gene>
    <name type="primary">csgA</name>
    <name type="ordered locus">b1042</name>
    <name type="ordered locus">JW1025</name>
</gene>
<sequence>MKLLKVAAIAAIVFSGSALAGVVPQYGGGGNHGGGGNNSGPNSELNIYQYGGGNSALALQTDARNSDLTITQHGGGNGADVGQGSDDSSIDLTQRGFGNSATLDQWNGKNSEMTVKQFGGGNGAAVDQTASNSSVNVTQVGFGNNATAHQY</sequence>
<protein>
    <recommendedName>
        <fullName>Major curlin subunit</fullName>
    </recommendedName>
</protein>
<feature type="signal peptide" evidence="2 3">
    <location>
        <begin position="1"/>
        <end position="20"/>
    </location>
</feature>
<feature type="chain" id="PRO_0000006369" description="Major curlin subunit">
    <location>
        <begin position="21"/>
        <end position="151"/>
    </location>
</feature>
<feature type="region of interest" description="Disordered" evidence="1">
    <location>
        <begin position="71"/>
        <end position="90"/>
    </location>
</feature>
<feature type="sequence conflict" description="In Ref. 1; AAA23616." evidence="5" ref="1">
    <original>A</original>
    <variation>E</variation>
    <location>
        <position position="7"/>
    </location>
</feature>
<comment type="function">
    <text>Curlin is the structural subunit of the curli fimbriae. Curli are coiled surface structures that assemble preferentially at growth temperatures below 37 degrees Celsius. Curli can bind to fibronectin.</text>
</comment>
<comment type="interaction">
    <interactant intactId="EBI-15647673">
        <id>P28307</id>
    </interactant>
    <interactant intactId="EBI-15647673">
        <id>P28307</id>
        <label>csgA</label>
    </interactant>
    <organismsDiffer>false</organismsDiffer>
    <experiments>3</experiments>
</comment>
<comment type="subcellular location">
    <subcellularLocation>
        <location>Fimbrium</location>
    </subcellularLocation>
    <text>Part of the curli surface structure.</text>
</comment>
<comment type="induction">
    <text evidence="4">Under control of the CsgD transcription factor, part of the csgBAC/ymdA operon.</text>
</comment>
<comment type="similarity">
    <text evidence="5">Belongs to the CsgA/CsgB family.</text>
</comment>
<proteinExistence type="evidence at protein level"/>
<keyword id="KW-0002">3D-structure</keyword>
<keyword id="KW-0903">Direct protein sequencing</keyword>
<keyword id="KW-0281">Fimbrium</keyword>
<keyword id="KW-1185">Reference proteome</keyword>
<keyword id="KW-0732">Signal</keyword>